<dbReference type="EMBL" id="AY225779">
    <property type="protein sequence ID" value="AAP73817.1"/>
    <property type="molecule type" value="mRNA"/>
</dbReference>
<dbReference type="SMR" id="Q6XLL9"/>
<dbReference type="GO" id="GO:0005576">
    <property type="term" value="C:extracellular region"/>
    <property type="evidence" value="ECO:0007669"/>
    <property type="project" value="UniProtKB-SubCell"/>
</dbReference>
<dbReference type="GO" id="GO:0008200">
    <property type="term" value="F:ion channel inhibitor activity"/>
    <property type="evidence" value="ECO:0007669"/>
    <property type="project" value="InterPro"/>
</dbReference>
<dbReference type="GO" id="GO:0015459">
    <property type="term" value="F:potassium channel regulator activity"/>
    <property type="evidence" value="ECO:0007669"/>
    <property type="project" value="UniProtKB-KW"/>
</dbReference>
<dbReference type="GO" id="GO:0090729">
    <property type="term" value="F:toxin activity"/>
    <property type="evidence" value="ECO:0007669"/>
    <property type="project" value="UniProtKB-KW"/>
</dbReference>
<dbReference type="Gene3D" id="3.30.30.10">
    <property type="entry name" value="Knottin, scorpion toxin-like"/>
    <property type="match status" value="1"/>
</dbReference>
<dbReference type="InterPro" id="IPR036574">
    <property type="entry name" value="Scorpion_toxin-like_sf"/>
</dbReference>
<dbReference type="InterPro" id="IPR001947">
    <property type="entry name" value="Scorpion_toxinS_K_inh"/>
</dbReference>
<dbReference type="Pfam" id="PF00451">
    <property type="entry name" value="Toxin_2"/>
    <property type="match status" value="1"/>
</dbReference>
<dbReference type="SUPFAM" id="SSF57095">
    <property type="entry name" value="Scorpion toxin-like"/>
    <property type="match status" value="1"/>
</dbReference>
<dbReference type="PROSITE" id="PS01138">
    <property type="entry name" value="SCORP_SHORT_TOXIN"/>
    <property type="match status" value="1"/>
</dbReference>
<feature type="signal peptide" evidence="3">
    <location>
        <begin position="1"/>
        <end position="23"/>
    </location>
</feature>
<feature type="chain" id="PRO_0000227031" description="Potassium channel toxin alpha-KTx 6.6">
    <location>
        <begin position="24"/>
        <end position="60"/>
    </location>
</feature>
<feature type="modified residue" description="Cysteine amide" evidence="2">
    <location>
        <position position="60"/>
    </location>
</feature>
<feature type="disulfide bond" evidence="2">
    <location>
        <begin position="29"/>
        <end position="50"/>
    </location>
</feature>
<feature type="disulfide bond" evidence="2">
    <location>
        <begin position="35"/>
        <end position="55"/>
    </location>
</feature>
<feature type="disulfide bond" evidence="2">
    <location>
        <begin position="39"/>
        <end position="57"/>
    </location>
</feature>
<feature type="disulfide bond" evidence="2">
    <location>
        <begin position="45"/>
        <end position="60"/>
    </location>
</feature>
<sequence>MNAKFILLLLVVATTMLLPDTQGAEVIKCRTPKDCAGPCRKQTGCPHGKCMNRTCRCNRCG</sequence>
<reference key="1">
    <citation type="journal article" date="2004" name="Proteins">
        <title>Evolutionary trace analysis of scorpion toxins specific for K-channels.</title>
        <authorList>
            <person name="Zhu S.-Y."/>
            <person name="Huys I."/>
            <person name="Dyason K."/>
            <person name="Verdonck F."/>
            <person name="Tytgat J."/>
        </authorList>
    </citation>
    <scope>NUCLEOTIDE SEQUENCE [MRNA]</scope>
    <source>
        <tissue>Venom gland</tissue>
    </source>
</reference>
<comment type="function">
    <text evidence="1">Blocker of voltage-gated potassium channels.</text>
</comment>
<comment type="subcellular location">
    <subcellularLocation>
        <location evidence="1">Secreted</location>
    </subcellularLocation>
</comment>
<comment type="tissue specificity">
    <text>Expressed by the venom gland.</text>
</comment>
<comment type="domain">
    <text evidence="5">Has the structural arrangement of an alpha-helix connected to antiparallel beta-sheets by disulfide bonds (CS-alpha/beta).</text>
</comment>
<comment type="similarity">
    <text evidence="5">Belongs to the short scorpion toxin superfamily. Potassium channel inhibitor family. Alpha-KTx 06 subfamily.</text>
</comment>
<protein>
    <recommendedName>
        <fullName evidence="4">Potassium channel toxin alpha-KTx 6.6</fullName>
    </recommendedName>
    <alternativeName>
        <fullName evidence="4">OcKTx1</fullName>
    </alternativeName>
</protein>
<keyword id="KW-0027">Amidation</keyword>
<keyword id="KW-1015">Disulfide bond</keyword>
<keyword id="KW-0872">Ion channel impairing toxin</keyword>
<keyword id="KW-0528">Neurotoxin</keyword>
<keyword id="KW-0632">Potassium channel impairing toxin</keyword>
<keyword id="KW-0964">Secreted</keyword>
<keyword id="KW-0732">Signal</keyword>
<keyword id="KW-0800">Toxin</keyword>
<organism>
    <name type="scientific">Opistophthalmus carinatus</name>
    <name type="common">African yellow leg scorpion</name>
    <dbReference type="NCBI Taxonomy" id="190115"/>
    <lineage>
        <taxon>Eukaryota</taxon>
        <taxon>Metazoa</taxon>
        <taxon>Ecdysozoa</taxon>
        <taxon>Arthropoda</taxon>
        <taxon>Chelicerata</taxon>
        <taxon>Arachnida</taxon>
        <taxon>Scorpiones</taxon>
        <taxon>Iurida</taxon>
        <taxon>Scorpionoidea</taxon>
        <taxon>Scorpionidae</taxon>
        <taxon>Opistophthalminae</taxon>
        <taxon>Opistophthalmus</taxon>
    </lineage>
</organism>
<accession>Q6XLL9</accession>
<name>KAX66_OPICA</name>
<evidence type="ECO:0000250" key="1"/>
<evidence type="ECO:0000250" key="2">
    <source>
        <dbReference type="UniProtKB" id="Q10726"/>
    </source>
</evidence>
<evidence type="ECO:0000255" key="3"/>
<evidence type="ECO:0000303" key="4">
    <source>
    </source>
</evidence>
<evidence type="ECO:0000305" key="5"/>
<proteinExistence type="evidence at transcript level"/>